<feature type="chain" id="PRO_0000213291" description="Protein SprT-like">
    <location>
        <begin position="1"/>
        <end position="148"/>
    </location>
</feature>
<feature type="domain" description="SprT-like" evidence="1">
    <location>
        <begin position="6"/>
        <end position="147"/>
    </location>
</feature>
<feature type="active site" evidence="1">
    <location>
        <position position="68"/>
    </location>
</feature>
<feature type="binding site" evidence="1">
    <location>
        <position position="67"/>
    </location>
    <ligand>
        <name>Zn(2+)</name>
        <dbReference type="ChEBI" id="CHEBI:29105"/>
    </ligand>
</feature>
<feature type="binding site" evidence="1">
    <location>
        <position position="71"/>
    </location>
    <ligand>
        <name>Zn(2+)</name>
        <dbReference type="ChEBI" id="CHEBI:29105"/>
    </ligand>
</feature>
<keyword id="KW-0963">Cytoplasm</keyword>
<keyword id="KW-0479">Metal-binding</keyword>
<keyword id="KW-1185">Reference proteome</keyword>
<keyword id="KW-0862">Zinc</keyword>
<protein>
    <recommendedName>
        <fullName evidence="1">Protein SprT-like</fullName>
    </recommendedName>
</protein>
<evidence type="ECO:0000255" key="1">
    <source>
        <dbReference type="HAMAP-Rule" id="MF_00745"/>
    </source>
</evidence>
<comment type="cofactor">
    <cofactor evidence="1">
        <name>Zn(2+)</name>
        <dbReference type="ChEBI" id="CHEBI:29105"/>
    </cofactor>
    <text evidence="1">Binds 1 zinc ion.</text>
</comment>
<comment type="subcellular location">
    <subcellularLocation>
        <location evidence="1">Cytoplasm</location>
    </subcellularLocation>
</comment>
<comment type="similarity">
    <text evidence="1">Belongs to the SprT family.</text>
</comment>
<name>SPRTL_LACPL</name>
<sequence length="148" mass="17616">MTDLELQQLVATISMHDFHRPFQHRAYFNARLRTTGGRYQLASHDIDINPKMLTDFDEATLIGVIKHELCHYHLHLTKRGYRHRDADFKRLLAQVGGSRYAPAPKQATARPYRYIYECQRCGRRYYRKRRMDTRRYTCGRCQGPIKLV</sequence>
<dbReference type="EMBL" id="AL935263">
    <property type="protein sequence ID" value="CCC78056.1"/>
    <property type="molecule type" value="Genomic_DNA"/>
</dbReference>
<dbReference type="RefSeq" id="WP_003640904.1">
    <property type="nucleotide sequence ID" value="NC_004567.2"/>
</dbReference>
<dbReference type="RefSeq" id="YP_004888570.1">
    <property type="nucleotide sequence ID" value="NC_004567.2"/>
</dbReference>
<dbReference type="STRING" id="220668.lp_0570"/>
<dbReference type="EnsemblBacteria" id="CCC78056">
    <property type="protein sequence ID" value="CCC78056"/>
    <property type="gene ID" value="lp_0570"/>
</dbReference>
<dbReference type="KEGG" id="lpl:lp_0570"/>
<dbReference type="PATRIC" id="fig|220668.9.peg.474"/>
<dbReference type="eggNOG" id="COG3091">
    <property type="taxonomic scope" value="Bacteria"/>
</dbReference>
<dbReference type="HOGENOM" id="CLU_123820_0_0_9"/>
<dbReference type="OrthoDB" id="9799909at2"/>
<dbReference type="PhylomeDB" id="Q88Z10"/>
<dbReference type="Proteomes" id="UP000000432">
    <property type="component" value="Chromosome"/>
</dbReference>
<dbReference type="GO" id="GO:0005737">
    <property type="term" value="C:cytoplasm"/>
    <property type="evidence" value="ECO:0007669"/>
    <property type="project" value="UniProtKB-SubCell"/>
</dbReference>
<dbReference type="GO" id="GO:0008270">
    <property type="term" value="F:zinc ion binding"/>
    <property type="evidence" value="ECO:0007669"/>
    <property type="project" value="UniProtKB-UniRule"/>
</dbReference>
<dbReference type="GO" id="GO:0006950">
    <property type="term" value="P:response to stress"/>
    <property type="evidence" value="ECO:0007669"/>
    <property type="project" value="UniProtKB-ARBA"/>
</dbReference>
<dbReference type="HAMAP" id="MF_00745">
    <property type="entry name" value="SprT_like"/>
    <property type="match status" value="1"/>
</dbReference>
<dbReference type="InterPro" id="IPR006640">
    <property type="entry name" value="SprT-like_domain"/>
</dbReference>
<dbReference type="InterPro" id="IPR023524">
    <property type="entry name" value="Uncharacterised_SprT-like"/>
</dbReference>
<dbReference type="NCBIfam" id="NF003339">
    <property type="entry name" value="PRK04351.1"/>
    <property type="match status" value="1"/>
</dbReference>
<dbReference type="Pfam" id="PF10263">
    <property type="entry name" value="SprT-like"/>
    <property type="match status" value="1"/>
</dbReference>
<dbReference type="SMART" id="SM00731">
    <property type="entry name" value="SprT"/>
    <property type="match status" value="1"/>
</dbReference>
<gene>
    <name type="ordered locus">lp_0570</name>
</gene>
<reference key="1">
    <citation type="journal article" date="2003" name="Proc. Natl. Acad. Sci. U.S.A.">
        <title>Complete genome sequence of Lactobacillus plantarum WCFS1.</title>
        <authorList>
            <person name="Kleerebezem M."/>
            <person name="Boekhorst J."/>
            <person name="van Kranenburg R."/>
            <person name="Molenaar D."/>
            <person name="Kuipers O.P."/>
            <person name="Leer R."/>
            <person name="Tarchini R."/>
            <person name="Peters S.A."/>
            <person name="Sandbrink H.M."/>
            <person name="Fiers M.W.E.J."/>
            <person name="Stiekema W."/>
            <person name="Klein Lankhorst R.M."/>
            <person name="Bron P.A."/>
            <person name="Hoffer S.M."/>
            <person name="Nierop Groot M.N."/>
            <person name="Kerkhoven R."/>
            <person name="De Vries M."/>
            <person name="Ursing B."/>
            <person name="De Vos W.M."/>
            <person name="Siezen R.J."/>
        </authorList>
    </citation>
    <scope>NUCLEOTIDE SEQUENCE [LARGE SCALE GENOMIC DNA]</scope>
    <source>
        <strain>ATCC BAA-793 / NCIMB 8826 / WCFS1</strain>
    </source>
</reference>
<reference key="2">
    <citation type="journal article" date="2012" name="J. Bacteriol.">
        <title>Complete resequencing and reannotation of the Lactobacillus plantarum WCFS1 genome.</title>
        <authorList>
            <person name="Siezen R.J."/>
            <person name="Francke C."/>
            <person name="Renckens B."/>
            <person name="Boekhorst J."/>
            <person name="Wels M."/>
            <person name="Kleerebezem M."/>
            <person name="van Hijum S.A."/>
        </authorList>
    </citation>
    <scope>NUCLEOTIDE SEQUENCE [LARGE SCALE GENOMIC DNA]</scope>
    <scope>GENOME REANNOTATION</scope>
    <source>
        <strain>ATCC BAA-793 / NCIMB 8826 / WCFS1</strain>
    </source>
</reference>
<organism>
    <name type="scientific">Lactiplantibacillus plantarum (strain ATCC BAA-793 / NCIMB 8826 / WCFS1)</name>
    <name type="common">Lactobacillus plantarum</name>
    <dbReference type="NCBI Taxonomy" id="220668"/>
    <lineage>
        <taxon>Bacteria</taxon>
        <taxon>Bacillati</taxon>
        <taxon>Bacillota</taxon>
        <taxon>Bacilli</taxon>
        <taxon>Lactobacillales</taxon>
        <taxon>Lactobacillaceae</taxon>
        <taxon>Lactiplantibacillus</taxon>
    </lineage>
</organism>
<accession>Q88Z10</accession>
<accession>F9UL41</accession>
<proteinExistence type="inferred from homology"/>